<keyword id="KW-1003">Cell membrane</keyword>
<keyword id="KW-0472">Membrane</keyword>
<keyword id="KW-1185">Reference proteome</keyword>
<keyword id="KW-0728">SH3 domain</keyword>
<keyword id="KW-0346">Stress response</keyword>
<keyword id="KW-0812">Transmembrane</keyword>
<keyword id="KW-1133">Transmembrane helix</keyword>
<gene>
    <name type="primary">SHO1</name>
    <name type="ORF">UREG_03671</name>
</gene>
<reference key="1">
    <citation type="journal article" date="2009" name="Genome Res.">
        <title>Comparative genomic analyses of the human fungal pathogens Coccidioides and their relatives.</title>
        <authorList>
            <person name="Sharpton T.J."/>
            <person name="Stajich J.E."/>
            <person name="Rounsley S.D."/>
            <person name="Gardner M.J."/>
            <person name="Wortman J.R."/>
            <person name="Jordar V.S."/>
            <person name="Maiti R."/>
            <person name="Kodira C.D."/>
            <person name="Neafsey D.E."/>
            <person name="Zeng Q."/>
            <person name="Hung C.-Y."/>
            <person name="McMahan C."/>
            <person name="Muszewska A."/>
            <person name="Grynberg M."/>
            <person name="Mandel M.A."/>
            <person name="Kellner E.M."/>
            <person name="Barker B.M."/>
            <person name="Galgiani J.N."/>
            <person name="Orbach M.J."/>
            <person name="Kirkland T.N."/>
            <person name="Cole G.T."/>
            <person name="Henn M.R."/>
            <person name="Birren B.W."/>
            <person name="Taylor J.W."/>
        </authorList>
    </citation>
    <scope>NUCLEOTIDE SEQUENCE [LARGE SCALE GENOMIC DNA]</scope>
    <source>
        <strain>UAMH 1704</strain>
    </source>
</reference>
<organism>
    <name type="scientific">Uncinocarpus reesii (strain UAMH 1704)</name>
    <dbReference type="NCBI Taxonomy" id="336963"/>
    <lineage>
        <taxon>Eukaryota</taxon>
        <taxon>Fungi</taxon>
        <taxon>Dikarya</taxon>
        <taxon>Ascomycota</taxon>
        <taxon>Pezizomycotina</taxon>
        <taxon>Eurotiomycetes</taxon>
        <taxon>Eurotiomycetidae</taxon>
        <taxon>Onygenales</taxon>
        <taxon>Onygenaceae</taxon>
        <taxon>Uncinocarpus</taxon>
    </lineage>
</organism>
<proteinExistence type="inferred from homology"/>
<feature type="chain" id="PRO_0000410403" description="High osmolarity signaling protein SHO1">
    <location>
        <begin position="1"/>
        <end position="283"/>
    </location>
</feature>
<feature type="topological domain" description="Cytoplasmic" evidence="2">
    <location>
        <begin position="1"/>
        <end position="14"/>
    </location>
</feature>
<feature type="transmembrane region" description="Helical" evidence="2">
    <location>
        <begin position="15"/>
        <end position="35"/>
    </location>
</feature>
<feature type="topological domain" description="Extracellular" evidence="2">
    <location>
        <begin position="36"/>
        <end position="44"/>
    </location>
</feature>
<feature type="transmembrane region" description="Helical" evidence="2">
    <location>
        <begin position="45"/>
        <end position="65"/>
    </location>
</feature>
<feature type="topological domain" description="Cytoplasmic" evidence="2">
    <location>
        <begin position="66"/>
        <end position="74"/>
    </location>
</feature>
<feature type="transmembrane region" description="Helical" evidence="2">
    <location>
        <begin position="75"/>
        <end position="95"/>
    </location>
</feature>
<feature type="topological domain" description="Extracellular" evidence="2">
    <location>
        <begin position="96"/>
        <end position="103"/>
    </location>
</feature>
<feature type="transmembrane region" description="Helical" evidence="2">
    <location>
        <begin position="104"/>
        <end position="124"/>
    </location>
</feature>
<feature type="topological domain" description="Cytoplasmic" evidence="2">
    <location>
        <begin position="125"/>
        <end position="283"/>
    </location>
</feature>
<feature type="domain" description="SH3" evidence="3">
    <location>
        <begin position="224"/>
        <end position="283"/>
    </location>
</feature>
<feature type="region of interest" description="Disordered" evidence="4">
    <location>
        <begin position="149"/>
        <end position="168"/>
    </location>
</feature>
<feature type="region of interest" description="Disordered" evidence="4">
    <location>
        <begin position="182"/>
        <end position="223"/>
    </location>
</feature>
<feature type="compositionally biased region" description="Polar residues" evidence="4">
    <location>
        <begin position="199"/>
        <end position="214"/>
    </location>
</feature>
<accession>C4JLG3</accession>
<sequence>MPRIRLDNLFGDPFALASVSISLLAWLIAFVSAIISSIRDSFPPIYWWNLVYMFLCIVGIAYVMATATTHIYSTAVVGYVSAGFAFTTFAADGLLKKQSGSNEAAGAGFILLSIVNVVWIFYFGSSPQSRSRHYIDSFAMHKEQPSYLNPSQMSNHYNNRPDTTVSTQPPQMYTSAQLNGFETSSPYGAPPGPSGASGIGNSQVNLAGTSSNGEAPNEVSPPTEYPYKAKAIYAYEANPDDANEISFTKNEILEVSDVSGRWWQAKKATGETGIAPSNYLILL</sequence>
<protein>
    <recommendedName>
        <fullName>High osmolarity signaling protein SHO1</fullName>
    </recommendedName>
    <alternativeName>
        <fullName>Osmosensor SHO1</fullName>
    </alternativeName>
</protein>
<evidence type="ECO:0000250" key="1"/>
<evidence type="ECO:0000255" key="2"/>
<evidence type="ECO:0000255" key="3">
    <source>
        <dbReference type="PROSITE-ProRule" id="PRU00192"/>
    </source>
</evidence>
<evidence type="ECO:0000256" key="4">
    <source>
        <dbReference type="SAM" id="MobiDB-lite"/>
    </source>
</evidence>
<evidence type="ECO:0000305" key="5"/>
<comment type="function">
    <text evidence="1">Plasma membrane osmosensor that activates the high osmolarity glycerol (HOG) MAPK signaling pathway in response to high osmolarity.</text>
</comment>
<comment type="subunit">
    <text evidence="1">Forms homooligomers.</text>
</comment>
<comment type="subcellular location">
    <subcellularLocation>
        <location evidence="1">Cell membrane</location>
        <topology evidence="1">Multi-pass membrane protein</topology>
    </subcellularLocation>
</comment>
<comment type="similarity">
    <text evidence="5">Belongs to the SHO1 family.</text>
</comment>
<dbReference type="EMBL" id="CH476616">
    <property type="protein sequence ID" value="EEP78825.1"/>
    <property type="molecule type" value="Genomic_DNA"/>
</dbReference>
<dbReference type="RefSeq" id="XP_002544154.1">
    <property type="nucleotide sequence ID" value="XM_002544108.1"/>
</dbReference>
<dbReference type="SMR" id="C4JLG3"/>
<dbReference type="FunCoup" id="C4JLG3">
    <property type="interactions" value="119"/>
</dbReference>
<dbReference type="STRING" id="336963.C4JLG3"/>
<dbReference type="GeneID" id="8439534"/>
<dbReference type="KEGG" id="ure:UREG_03671"/>
<dbReference type="VEuPathDB" id="FungiDB:UREG_03671"/>
<dbReference type="eggNOG" id="ENOG502QW7A">
    <property type="taxonomic scope" value="Eukaryota"/>
</dbReference>
<dbReference type="HOGENOM" id="CLU_043316_1_0_1"/>
<dbReference type="InParanoid" id="C4JLG3"/>
<dbReference type="OMA" id="NIVWIFY"/>
<dbReference type="OrthoDB" id="5983572at2759"/>
<dbReference type="Proteomes" id="UP000002058">
    <property type="component" value="Unassembled WGS sequence"/>
</dbReference>
<dbReference type="GO" id="GO:0005886">
    <property type="term" value="C:plasma membrane"/>
    <property type="evidence" value="ECO:0007669"/>
    <property type="project" value="UniProtKB-SubCell"/>
</dbReference>
<dbReference type="CDD" id="cd11855">
    <property type="entry name" value="SH3_Sho1p"/>
    <property type="match status" value="1"/>
</dbReference>
<dbReference type="FunFam" id="2.30.30.40:FF:000213">
    <property type="entry name" value="High osmolarity signaling protein SHO1"/>
    <property type="match status" value="1"/>
</dbReference>
<dbReference type="Gene3D" id="2.30.30.40">
    <property type="entry name" value="SH3 Domains"/>
    <property type="match status" value="1"/>
</dbReference>
<dbReference type="InterPro" id="IPR036028">
    <property type="entry name" value="SH3-like_dom_sf"/>
</dbReference>
<dbReference type="InterPro" id="IPR001452">
    <property type="entry name" value="SH3_domain"/>
</dbReference>
<dbReference type="InterPro" id="IPR035522">
    <property type="entry name" value="Sho1_SH3"/>
</dbReference>
<dbReference type="Pfam" id="PF00018">
    <property type="entry name" value="SH3_1"/>
    <property type="match status" value="1"/>
</dbReference>
<dbReference type="PRINTS" id="PR00452">
    <property type="entry name" value="SH3DOMAIN"/>
</dbReference>
<dbReference type="SMART" id="SM00326">
    <property type="entry name" value="SH3"/>
    <property type="match status" value="1"/>
</dbReference>
<dbReference type="SUPFAM" id="SSF50044">
    <property type="entry name" value="SH3-domain"/>
    <property type="match status" value="1"/>
</dbReference>
<dbReference type="PROSITE" id="PS50002">
    <property type="entry name" value="SH3"/>
    <property type="match status" value="1"/>
</dbReference>
<name>SHO1_UNCRE</name>